<feature type="initiator methionine" description="Removed" evidence="1">
    <location>
        <position position="1"/>
    </location>
</feature>
<feature type="chain" id="PRO_0000221337" description="Histone H3.2">
    <location>
        <begin position="2"/>
        <end position="41" status="greater than"/>
    </location>
</feature>
<feature type="region of interest" description="Disordered" evidence="2">
    <location>
        <begin position="1"/>
        <end position="41"/>
    </location>
</feature>
<feature type="non-terminal residue">
    <location>
        <position position="41"/>
    </location>
</feature>
<name>H32_TETFU</name>
<organism>
    <name type="scientific">Tetrahymena furgasoni</name>
    <dbReference type="NCBI Taxonomy" id="5898"/>
    <lineage>
        <taxon>Eukaryota</taxon>
        <taxon>Sar</taxon>
        <taxon>Alveolata</taxon>
        <taxon>Ciliophora</taxon>
        <taxon>Intramacronucleata</taxon>
        <taxon>Oligohymenophorea</taxon>
        <taxon>Hymenostomatida</taxon>
        <taxon>Tetrahymenina</taxon>
        <taxon>Tetrahymenidae</taxon>
        <taxon>Tetrahymena</taxon>
    </lineage>
</organism>
<sequence>MARTKQTARKSTGAKAPRKQLASKAARKSAPATGGIKKPHR</sequence>
<keyword id="KW-0158">Chromosome</keyword>
<keyword id="KW-0238">DNA-binding</keyword>
<keyword id="KW-0544">Nucleosome core</keyword>
<keyword id="KW-0539">Nucleus</keyword>
<protein>
    <recommendedName>
        <fullName>Histone H3.2</fullName>
    </recommendedName>
</protein>
<proteinExistence type="inferred from homology"/>
<evidence type="ECO:0000250" key="1"/>
<evidence type="ECO:0000256" key="2">
    <source>
        <dbReference type="SAM" id="MobiDB-lite"/>
    </source>
</evidence>
<evidence type="ECO:0000305" key="3"/>
<accession>P69115</accession>
<accession>P17705</accession>
<comment type="function">
    <text>Core component of nucleosome. Nucleosomes wrap and compact DNA into chromatin, limiting DNA accessibility to the cellular machineries which require DNA as a template. Histones thereby play a central role in transcription regulation, DNA repair, DNA replication and chromosomal stability. DNA accessibility is regulated via a complex set of post-translational modifications of histones, also called histone code, and nucleosome remodeling.</text>
</comment>
<comment type="subunit">
    <text>The nucleosome is a histone octamer containing two molecules each of H2A, H2B, H3 and H4 assembled in one H3-H4 heterotetramer and two H2A-H2B heterodimers. The octamer wraps approximately 147 bp of DNA.</text>
</comment>
<comment type="subcellular location">
    <subcellularLocation>
        <location evidence="1">Nucleus</location>
    </subcellularLocation>
    <subcellularLocation>
        <location evidence="1">Chromosome</location>
    </subcellularLocation>
</comment>
<comment type="similarity">
    <text evidence="3">Belongs to the histone H3 family.</text>
</comment>
<dbReference type="EMBL" id="X17132">
    <property type="protein sequence ID" value="CAA34998.1"/>
    <property type="molecule type" value="Genomic_DNA"/>
</dbReference>
<dbReference type="PIR" id="S10273">
    <property type="entry name" value="S10273"/>
</dbReference>
<dbReference type="GO" id="GO:0000786">
    <property type="term" value="C:nucleosome"/>
    <property type="evidence" value="ECO:0007669"/>
    <property type="project" value="UniProtKB-KW"/>
</dbReference>
<dbReference type="GO" id="GO:0005634">
    <property type="term" value="C:nucleus"/>
    <property type="evidence" value="ECO:0007669"/>
    <property type="project" value="UniProtKB-SubCell"/>
</dbReference>
<dbReference type="GO" id="GO:0003677">
    <property type="term" value="F:DNA binding"/>
    <property type="evidence" value="ECO:0007669"/>
    <property type="project" value="UniProtKB-KW"/>
</dbReference>
<dbReference type="GO" id="GO:0046982">
    <property type="term" value="F:protein heterodimerization activity"/>
    <property type="evidence" value="ECO:0007669"/>
    <property type="project" value="InterPro"/>
</dbReference>
<dbReference type="GO" id="GO:0030527">
    <property type="term" value="F:structural constituent of chromatin"/>
    <property type="evidence" value="ECO:0007669"/>
    <property type="project" value="InterPro"/>
</dbReference>
<dbReference type="Gene3D" id="1.10.20.10">
    <property type="entry name" value="Histone, subunit A"/>
    <property type="match status" value="1"/>
</dbReference>
<dbReference type="InterPro" id="IPR009072">
    <property type="entry name" value="Histone-fold"/>
</dbReference>
<dbReference type="InterPro" id="IPR000164">
    <property type="entry name" value="Histone_H3/CENP-A"/>
</dbReference>
<dbReference type="PANTHER" id="PTHR11426">
    <property type="entry name" value="HISTONE H3"/>
    <property type="match status" value="1"/>
</dbReference>
<dbReference type="PRINTS" id="PR00622">
    <property type="entry name" value="HISTONEH3"/>
</dbReference>
<dbReference type="SUPFAM" id="SSF47113">
    <property type="entry name" value="Histone-fold"/>
    <property type="match status" value="1"/>
</dbReference>
<dbReference type="PROSITE" id="PS00322">
    <property type="entry name" value="HISTONE_H3_1"/>
    <property type="match status" value="1"/>
</dbReference>
<reference key="1">
    <citation type="journal article" date="1990" name="Nucleic Acids Res.">
        <title>Characterization of the promoter region of Tetrahymena genes.</title>
        <authorList>
            <person name="Brunk C.F."/>
            <person name="Sadler L.A."/>
        </authorList>
    </citation>
    <scope>NUCLEOTIDE SEQUENCE [GENOMIC DNA]</scope>
</reference>
<reference key="2">
    <citation type="journal article" date="1990" name="J. Mol. Evol.">
        <title>Phylogenetic relationships among Tetrahymena species determined using the polymerase chain reaction.</title>
        <authorList>
            <person name="Brunk C.F."/>
            <person name="Kahn R.W."/>
            <person name="Sadler L.A."/>
        </authorList>
    </citation>
    <scope>NUCLEOTIDE SEQUENCE [GENOMIC DNA]</scope>
</reference>